<sequence>MTNRLVLSGTVCRTPLRKVSPSGIPHCQFVLEHRSVQEEAGFHRQAWCQMPVIVSGHENQAITHSITVGSRITVQGFISCHKAKNGLSKMVLHAEQIELIDSGD</sequence>
<name>PRIB_ECOSE</name>
<organism>
    <name type="scientific">Escherichia coli (strain SE11)</name>
    <dbReference type="NCBI Taxonomy" id="409438"/>
    <lineage>
        <taxon>Bacteria</taxon>
        <taxon>Pseudomonadati</taxon>
        <taxon>Pseudomonadota</taxon>
        <taxon>Gammaproteobacteria</taxon>
        <taxon>Enterobacterales</taxon>
        <taxon>Enterobacteriaceae</taxon>
        <taxon>Escherichia</taxon>
    </lineage>
</organism>
<dbReference type="EMBL" id="AP009240">
    <property type="protein sequence ID" value="BAG80024.1"/>
    <property type="molecule type" value="Genomic_DNA"/>
</dbReference>
<dbReference type="RefSeq" id="WP_001296681.1">
    <property type="nucleotide sequence ID" value="NC_011415.1"/>
</dbReference>
<dbReference type="SMR" id="B6I2A7"/>
<dbReference type="GeneID" id="93777622"/>
<dbReference type="KEGG" id="ecy:ECSE_4500"/>
<dbReference type="HOGENOM" id="CLU_166075_0_0_6"/>
<dbReference type="Proteomes" id="UP000008199">
    <property type="component" value="Chromosome"/>
</dbReference>
<dbReference type="GO" id="GO:1990077">
    <property type="term" value="C:primosome complex"/>
    <property type="evidence" value="ECO:0007669"/>
    <property type="project" value="UniProtKB-KW"/>
</dbReference>
<dbReference type="GO" id="GO:0003697">
    <property type="term" value="F:single-stranded DNA binding"/>
    <property type="evidence" value="ECO:0007669"/>
    <property type="project" value="UniProtKB-UniRule"/>
</dbReference>
<dbReference type="GO" id="GO:0006269">
    <property type="term" value="P:DNA replication, synthesis of primer"/>
    <property type="evidence" value="ECO:0007669"/>
    <property type="project" value="UniProtKB-KW"/>
</dbReference>
<dbReference type="CDD" id="cd04496">
    <property type="entry name" value="SSB_OBF"/>
    <property type="match status" value="1"/>
</dbReference>
<dbReference type="FunFam" id="2.40.50.140:FF:000077">
    <property type="entry name" value="Primosomal replication protein N"/>
    <property type="match status" value="1"/>
</dbReference>
<dbReference type="Gene3D" id="2.40.50.140">
    <property type="entry name" value="Nucleic acid-binding proteins"/>
    <property type="match status" value="1"/>
</dbReference>
<dbReference type="HAMAP" id="MF_00720">
    <property type="entry name" value="PriB"/>
    <property type="match status" value="1"/>
</dbReference>
<dbReference type="InterPro" id="IPR012340">
    <property type="entry name" value="NA-bd_OB-fold"/>
</dbReference>
<dbReference type="InterPro" id="IPR000424">
    <property type="entry name" value="Primosome_PriB/ssb"/>
</dbReference>
<dbReference type="InterPro" id="IPR023646">
    <property type="entry name" value="Prisomal_replication_PriB"/>
</dbReference>
<dbReference type="NCBIfam" id="TIGR04418">
    <property type="entry name" value="PriB_gamma"/>
    <property type="match status" value="1"/>
</dbReference>
<dbReference type="Pfam" id="PF22657">
    <property type="entry name" value="SSB_1"/>
    <property type="match status" value="1"/>
</dbReference>
<dbReference type="PIRSF" id="PIRSF003135">
    <property type="entry name" value="Primosomal_n"/>
    <property type="match status" value="1"/>
</dbReference>
<dbReference type="SUPFAM" id="SSF50249">
    <property type="entry name" value="Nucleic acid-binding proteins"/>
    <property type="match status" value="1"/>
</dbReference>
<dbReference type="PROSITE" id="PS50935">
    <property type="entry name" value="SSB"/>
    <property type="match status" value="1"/>
</dbReference>
<proteinExistence type="inferred from homology"/>
<comment type="function">
    <text evidence="1">Involved in the restart of stalled replication forks, which reloads the replicative helicase on sites other than the origin of replication; the PriA-PriB pathway is the major replication restart pathway. During primosome assembly it facilitates complex formation between PriA and DnaT on DNA; stabilizes PriA on DNA. Stimulates the DNA unwinding activity of PriA helicase.</text>
</comment>
<comment type="subunit">
    <text evidence="1">Homodimer. Interacts with PriA and DnaT. Component of the replication restart primosome. Primosome assembly occurs via a 'hand-off' mechanism. PriA binds to replication forks, subsequently PriB then DnaT bind; DnaT then displaces ssDNA to generate the helicase loading substrate.</text>
</comment>
<comment type="similarity">
    <text evidence="1">Belongs to the PriB family.</text>
</comment>
<accession>B6I2A7</accession>
<keyword id="KW-0235">DNA replication</keyword>
<keyword id="KW-0238">DNA-binding</keyword>
<keyword id="KW-0639">Primosome</keyword>
<feature type="chain" id="PRO_1000132621" description="Replication restart protein PriB">
    <location>
        <begin position="1"/>
        <end position="104"/>
    </location>
</feature>
<feature type="domain" description="SSB" evidence="1">
    <location>
        <begin position="1"/>
        <end position="101"/>
    </location>
</feature>
<protein>
    <recommendedName>
        <fullName evidence="1">Replication restart protein PriB</fullName>
    </recommendedName>
</protein>
<evidence type="ECO:0000255" key="1">
    <source>
        <dbReference type="HAMAP-Rule" id="MF_00720"/>
    </source>
</evidence>
<reference key="1">
    <citation type="journal article" date="2008" name="DNA Res.">
        <title>Complete genome sequence and comparative analysis of the wild-type commensal Escherichia coli strain SE11 isolated from a healthy adult.</title>
        <authorList>
            <person name="Oshima K."/>
            <person name="Toh H."/>
            <person name="Ogura Y."/>
            <person name="Sasamoto H."/>
            <person name="Morita H."/>
            <person name="Park S.-H."/>
            <person name="Ooka T."/>
            <person name="Iyoda S."/>
            <person name="Taylor T.D."/>
            <person name="Hayashi T."/>
            <person name="Itoh K."/>
            <person name="Hattori M."/>
        </authorList>
    </citation>
    <scope>NUCLEOTIDE SEQUENCE [LARGE SCALE GENOMIC DNA]</scope>
    <source>
        <strain>SE11</strain>
    </source>
</reference>
<gene>
    <name evidence="1" type="primary">priB</name>
    <name type="ordered locus">ECSE_4500</name>
</gene>